<feature type="chain" id="PRO_0000127867" description="Uncharacterized protein AF_0369">
    <location>
        <begin position="1"/>
        <end position="45"/>
    </location>
</feature>
<feature type="transmembrane region" description="Helical" evidence="1">
    <location>
        <begin position="15"/>
        <end position="37"/>
    </location>
</feature>
<proteinExistence type="predicted"/>
<dbReference type="EMBL" id="AE000782">
    <property type="protein sequence ID" value="AAB90878.1"/>
    <property type="molecule type" value="Genomic_DNA"/>
</dbReference>
<dbReference type="PIR" id="A69296">
    <property type="entry name" value="A69296"/>
</dbReference>
<dbReference type="RefSeq" id="WP_010877876.1">
    <property type="nucleotide sequence ID" value="NC_000917.1"/>
</dbReference>
<dbReference type="SMR" id="O29878"/>
<dbReference type="STRING" id="224325.AF_0369"/>
<dbReference type="PaxDb" id="224325-AF_0369"/>
<dbReference type="EnsemblBacteria" id="AAB90878">
    <property type="protein sequence ID" value="AAB90878"/>
    <property type="gene ID" value="AF_0369"/>
</dbReference>
<dbReference type="GeneID" id="31757482"/>
<dbReference type="KEGG" id="afu:AF_0369"/>
<dbReference type="HOGENOM" id="CLU_3194310_0_0_2"/>
<dbReference type="Proteomes" id="UP000002199">
    <property type="component" value="Chromosome"/>
</dbReference>
<dbReference type="GO" id="GO:0016020">
    <property type="term" value="C:membrane"/>
    <property type="evidence" value="ECO:0007669"/>
    <property type="project" value="UniProtKB-SubCell"/>
</dbReference>
<accession>O29878</accession>
<gene>
    <name type="ordered locus">AF_0369</name>
</gene>
<comment type="subcellular location">
    <subcellularLocation>
        <location evidence="2">Membrane</location>
        <topology evidence="2">Single-pass membrane protein</topology>
    </subcellularLocation>
</comment>
<sequence length="45" mass="4700">MIVAIMVMNAKGVSEVVGTLMAVLITFALVAVVFNFITAATVKNT</sequence>
<keyword id="KW-0472">Membrane</keyword>
<keyword id="KW-1185">Reference proteome</keyword>
<keyword id="KW-0812">Transmembrane</keyword>
<keyword id="KW-1133">Transmembrane helix</keyword>
<reference key="1">
    <citation type="journal article" date="1997" name="Nature">
        <title>The complete genome sequence of the hyperthermophilic, sulphate-reducing archaeon Archaeoglobus fulgidus.</title>
        <authorList>
            <person name="Klenk H.-P."/>
            <person name="Clayton R.A."/>
            <person name="Tomb J.-F."/>
            <person name="White O."/>
            <person name="Nelson K.E."/>
            <person name="Ketchum K.A."/>
            <person name="Dodson R.J."/>
            <person name="Gwinn M.L."/>
            <person name="Hickey E.K."/>
            <person name="Peterson J.D."/>
            <person name="Richardson D.L."/>
            <person name="Kerlavage A.R."/>
            <person name="Graham D.E."/>
            <person name="Kyrpides N.C."/>
            <person name="Fleischmann R.D."/>
            <person name="Quackenbush J."/>
            <person name="Lee N.H."/>
            <person name="Sutton G.G."/>
            <person name="Gill S.R."/>
            <person name="Kirkness E.F."/>
            <person name="Dougherty B.A."/>
            <person name="McKenney K."/>
            <person name="Adams M.D."/>
            <person name="Loftus B.J."/>
            <person name="Peterson S.N."/>
            <person name="Reich C.I."/>
            <person name="McNeil L.K."/>
            <person name="Badger J.H."/>
            <person name="Glodek A."/>
            <person name="Zhou L."/>
            <person name="Overbeek R."/>
            <person name="Gocayne J.D."/>
            <person name="Weidman J.F."/>
            <person name="McDonald L.A."/>
            <person name="Utterback T.R."/>
            <person name="Cotton M.D."/>
            <person name="Spriggs T."/>
            <person name="Artiach P."/>
            <person name="Kaine B.P."/>
            <person name="Sykes S.M."/>
            <person name="Sadow P.W."/>
            <person name="D'Andrea K.P."/>
            <person name="Bowman C."/>
            <person name="Fujii C."/>
            <person name="Garland S.A."/>
            <person name="Mason T.M."/>
            <person name="Olsen G.J."/>
            <person name="Fraser C.M."/>
            <person name="Smith H.O."/>
            <person name="Woese C.R."/>
            <person name="Venter J.C."/>
        </authorList>
    </citation>
    <scope>NUCLEOTIDE SEQUENCE [LARGE SCALE GENOMIC DNA]</scope>
    <source>
        <strain>ATCC 49558 / DSM 4304 / JCM 9628 / NBRC 100126 / VC-16</strain>
    </source>
</reference>
<evidence type="ECO:0000255" key="1"/>
<evidence type="ECO:0000305" key="2"/>
<name>Y369_ARCFU</name>
<protein>
    <recommendedName>
        <fullName>Uncharacterized protein AF_0369</fullName>
    </recommendedName>
</protein>
<organism>
    <name type="scientific">Archaeoglobus fulgidus (strain ATCC 49558 / DSM 4304 / JCM 9628 / NBRC 100126 / VC-16)</name>
    <dbReference type="NCBI Taxonomy" id="224325"/>
    <lineage>
        <taxon>Archaea</taxon>
        <taxon>Methanobacteriati</taxon>
        <taxon>Methanobacteriota</taxon>
        <taxon>Archaeoglobi</taxon>
        <taxon>Archaeoglobales</taxon>
        <taxon>Archaeoglobaceae</taxon>
        <taxon>Archaeoglobus</taxon>
    </lineage>
</organism>